<dbReference type="EC" id="3.1.1.29" evidence="1"/>
<dbReference type="EMBL" id="CR954246">
    <property type="protein sequence ID" value="CAI86127.1"/>
    <property type="molecule type" value="Genomic_DNA"/>
</dbReference>
<dbReference type="SMR" id="Q3IK86"/>
<dbReference type="STRING" id="326442.PSHAa1052"/>
<dbReference type="KEGG" id="pha:PSHAa1052"/>
<dbReference type="PATRIC" id="fig|326442.8.peg.1009"/>
<dbReference type="eggNOG" id="COG0193">
    <property type="taxonomic scope" value="Bacteria"/>
</dbReference>
<dbReference type="HOGENOM" id="CLU_062456_3_1_6"/>
<dbReference type="BioCyc" id="PHAL326442:PSHA_RS05180-MONOMER"/>
<dbReference type="Proteomes" id="UP000006843">
    <property type="component" value="Chromosome I"/>
</dbReference>
<dbReference type="GO" id="GO:0005737">
    <property type="term" value="C:cytoplasm"/>
    <property type="evidence" value="ECO:0007669"/>
    <property type="project" value="UniProtKB-SubCell"/>
</dbReference>
<dbReference type="GO" id="GO:0004045">
    <property type="term" value="F:peptidyl-tRNA hydrolase activity"/>
    <property type="evidence" value="ECO:0007669"/>
    <property type="project" value="UniProtKB-UniRule"/>
</dbReference>
<dbReference type="GO" id="GO:0000049">
    <property type="term" value="F:tRNA binding"/>
    <property type="evidence" value="ECO:0007669"/>
    <property type="project" value="UniProtKB-UniRule"/>
</dbReference>
<dbReference type="GO" id="GO:0006515">
    <property type="term" value="P:protein quality control for misfolded or incompletely synthesized proteins"/>
    <property type="evidence" value="ECO:0007669"/>
    <property type="project" value="UniProtKB-UniRule"/>
</dbReference>
<dbReference type="GO" id="GO:0072344">
    <property type="term" value="P:rescue of stalled ribosome"/>
    <property type="evidence" value="ECO:0007669"/>
    <property type="project" value="UniProtKB-UniRule"/>
</dbReference>
<dbReference type="CDD" id="cd00462">
    <property type="entry name" value="PTH"/>
    <property type="match status" value="1"/>
</dbReference>
<dbReference type="FunFam" id="3.40.50.1470:FF:000001">
    <property type="entry name" value="Peptidyl-tRNA hydrolase"/>
    <property type="match status" value="1"/>
</dbReference>
<dbReference type="Gene3D" id="3.40.50.1470">
    <property type="entry name" value="Peptidyl-tRNA hydrolase"/>
    <property type="match status" value="1"/>
</dbReference>
<dbReference type="HAMAP" id="MF_00083">
    <property type="entry name" value="Pept_tRNA_hydro_bact"/>
    <property type="match status" value="1"/>
</dbReference>
<dbReference type="InterPro" id="IPR001328">
    <property type="entry name" value="Pept_tRNA_hydro"/>
</dbReference>
<dbReference type="InterPro" id="IPR018171">
    <property type="entry name" value="Pept_tRNA_hydro_CS"/>
</dbReference>
<dbReference type="InterPro" id="IPR036416">
    <property type="entry name" value="Pept_tRNA_hydro_sf"/>
</dbReference>
<dbReference type="NCBIfam" id="TIGR00447">
    <property type="entry name" value="pth"/>
    <property type="match status" value="1"/>
</dbReference>
<dbReference type="PANTHER" id="PTHR17224">
    <property type="entry name" value="PEPTIDYL-TRNA HYDROLASE"/>
    <property type="match status" value="1"/>
</dbReference>
<dbReference type="PANTHER" id="PTHR17224:SF1">
    <property type="entry name" value="PEPTIDYL-TRNA HYDROLASE"/>
    <property type="match status" value="1"/>
</dbReference>
<dbReference type="Pfam" id="PF01195">
    <property type="entry name" value="Pept_tRNA_hydro"/>
    <property type="match status" value="1"/>
</dbReference>
<dbReference type="SUPFAM" id="SSF53178">
    <property type="entry name" value="Peptidyl-tRNA hydrolase-like"/>
    <property type="match status" value="1"/>
</dbReference>
<dbReference type="PROSITE" id="PS01195">
    <property type="entry name" value="PEPT_TRNA_HYDROL_1"/>
    <property type="match status" value="1"/>
</dbReference>
<dbReference type="PROSITE" id="PS01196">
    <property type="entry name" value="PEPT_TRNA_HYDROL_2"/>
    <property type="match status" value="1"/>
</dbReference>
<name>PTH_PSET1</name>
<evidence type="ECO:0000255" key="1">
    <source>
        <dbReference type="HAMAP-Rule" id="MF_00083"/>
    </source>
</evidence>
<protein>
    <recommendedName>
        <fullName evidence="1">Peptidyl-tRNA hydrolase</fullName>
        <shortName evidence="1">Pth</shortName>
        <ecNumber evidence="1">3.1.1.29</ecNumber>
    </recommendedName>
</protein>
<comment type="function">
    <text evidence="1">Hydrolyzes ribosome-free peptidyl-tRNAs (with 1 or more amino acids incorporated), which drop off the ribosome during protein synthesis, or as a result of ribosome stalling.</text>
</comment>
<comment type="function">
    <text evidence="1">Catalyzes the release of premature peptidyl moieties from peptidyl-tRNA molecules trapped in stalled 50S ribosomal subunits, and thus maintains levels of free tRNAs and 50S ribosomes.</text>
</comment>
<comment type="catalytic activity">
    <reaction evidence="1">
        <text>an N-acyl-L-alpha-aminoacyl-tRNA + H2O = an N-acyl-L-amino acid + a tRNA + H(+)</text>
        <dbReference type="Rhea" id="RHEA:54448"/>
        <dbReference type="Rhea" id="RHEA-COMP:10123"/>
        <dbReference type="Rhea" id="RHEA-COMP:13883"/>
        <dbReference type="ChEBI" id="CHEBI:15377"/>
        <dbReference type="ChEBI" id="CHEBI:15378"/>
        <dbReference type="ChEBI" id="CHEBI:59874"/>
        <dbReference type="ChEBI" id="CHEBI:78442"/>
        <dbReference type="ChEBI" id="CHEBI:138191"/>
        <dbReference type="EC" id="3.1.1.29"/>
    </reaction>
</comment>
<comment type="subunit">
    <text evidence="1">Monomer.</text>
</comment>
<comment type="subcellular location">
    <subcellularLocation>
        <location evidence="1">Cytoplasm</location>
    </subcellularLocation>
</comment>
<comment type="similarity">
    <text evidence="1">Belongs to the PTH family.</text>
</comment>
<keyword id="KW-0963">Cytoplasm</keyword>
<keyword id="KW-0378">Hydrolase</keyword>
<keyword id="KW-1185">Reference proteome</keyword>
<keyword id="KW-0694">RNA-binding</keyword>
<keyword id="KW-0820">tRNA-binding</keyword>
<sequence>MNSIQMLVGLANPGPEYANTRHNAGAWFIEQLAARYNCTLKHDPKYHGLTGKVIIQDQEFKLLIPTTYMNLSGKAVGSLANFFKIPVESILVAHDELDLEPGVAKLKKGGGHGGHNGLKDIIAKMANQKDFMRLRIGVGHPGHREMVTGWVLGKAAKADQEKMDAAIDEAVRCMEILAKDGVLKAQNRLHSFKP</sequence>
<gene>
    <name evidence="1" type="primary">pth</name>
    <name type="ordered locus">PSHAa1052</name>
</gene>
<feature type="chain" id="PRO_0000264078" description="Peptidyl-tRNA hydrolase">
    <location>
        <begin position="1"/>
        <end position="194"/>
    </location>
</feature>
<feature type="active site" description="Proton acceptor" evidence="1">
    <location>
        <position position="22"/>
    </location>
</feature>
<feature type="binding site" evidence="1">
    <location>
        <position position="17"/>
    </location>
    <ligand>
        <name>tRNA</name>
        <dbReference type="ChEBI" id="CHEBI:17843"/>
    </ligand>
</feature>
<feature type="binding site" evidence="1">
    <location>
        <position position="68"/>
    </location>
    <ligand>
        <name>tRNA</name>
        <dbReference type="ChEBI" id="CHEBI:17843"/>
    </ligand>
</feature>
<feature type="binding site" evidence="1">
    <location>
        <position position="70"/>
    </location>
    <ligand>
        <name>tRNA</name>
        <dbReference type="ChEBI" id="CHEBI:17843"/>
    </ligand>
</feature>
<feature type="binding site" evidence="1">
    <location>
        <position position="116"/>
    </location>
    <ligand>
        <name>tRNA</name>
        <dbReference type="ChEBI" id="CHEBI:17843"/>
    </ligand>
</feature>
<feature type="site" description="Discriminates between blocked and unblocked aminoacyl-tRNA" evidence="1">
    <location>
        <position position="12"/>
    </location>
</feature>
<feature type="site" description="Stabilizes the basic form of H active site to accept a proton" evidence="1">
    <location>
        <position position="95"/>
    </location>
</feature>
<reference key="1">
    <citation type="journal article" date="2005" name="Genome Res.">
        <title>Coping with cold: the genome of the versatile marine Antarctica bacterium Pseudoalteromonas haloplanktis TAC125.</title>
        <authorList>
            <person name="Medigue C."/>
            <person name="Krin E."/>
            <person name="Pascal G."/>
            <person name="Barbe V."/>
            <person name="Bernsel A."/>
            <person name="Bertin P.N."/>
            <person name="Cheung F."/>
            <person name="Cruveiller S."/>
            <person name="D'Amico S."/>
            <person name="Duilio A."/>
            <person name="Fang G."/>
            <person name="Feller G."/>
            <person name="Ho C."/>
            <person name="Mangenot S."/>
            <person name="Marino G."/>
            <person name="Nilsson J."/>
            <person name="Parrilli E."/>
            <person name="Rocha E.P.C."/>
            <person name="Rouy Z."/>
            <person name="Sekowska A."/>
            <person name="Tutino M.L."/>
            <person name="Vallenet D."/>
            <person name="von Heijne G."/>
            <person name="Danchin A."/>
        </authorList>
    </citation>
    <scope>NUCLEOTIDE SEQUENCE [LARGE SCALE GENOMIC DNA]</scope>
    <source>
        <strain>TAC 125</strain>
    </source>
</reference>
<proteinExistence type="inferred from homology"/>
<organism>
    <name type="scientific">Pseudoalteromonas translucida (strain TAC 125)</name>
    <dbReference type="NCBI Taxonomy" id="326442"/>
    <lineage>
        <taxon>Bacteria</taxon>
        <taxon>Pseudomonadati</taxon>
        <taxon>Pseudomonadota</taxon>
        <taxon>Gammaproteobacteria</taxon>
        <taxon>Alteromonadales</taxon>
        <taxon>Pseudoalteromonadaceae</taxon>
        <taxon>Pseudoalteromonas</taxon>
    </lineage>
</organism>
<accession>Q3IK86</accession>